<gene>
    <name type="primary">yuaE</name>
    <name type="synonym">ybdA</name>
    <name type="ordered locus">ECOK12F014</name>
</gene>
<comment type="subcellular location">
    <subcellularLocation>
        <location evidence="2">Membrane</location>
        <topology evidence="1">Lipid-anchor</topology>
    </subcellularLocation>
</comment>
<protein>
    <recommendedName>
        <fullName>Uncharacterized protein YuaE</fullName>
    </recommendedName>
</protein>
<geneLocation type="plasmid">
    <name>F</name>
</geneLocation>
<feature type="signal peptide" evidence="1">
    <location>
        <begin position="1"/>
        <end position="21"/>
    </location>
</feature>
<feature type="chain" id="PRO_0000267217" description="Uncharacterized protein YuaE">
    <location>
        <begin position="22"/>
        <end position="137"/>
    </location>
</feature>
<feature type="lipid moiety-binding region" description="N-palmitoyl cysteine" evidence="1">
    <location>
        <position position="22"/>
    </location>
</feature>
<feature type="lipid moiety-binding region" description="S-diacylglycerol cysteine" evidence="1">
    <location>
        <position position="22"/>
    </location>
</feature>
<name>YUAE_ECOLI</name>
<evidence type="ECO:0000255" key="1">
    <source>
        <dbReference type="PROSITE-ProRule" id="PRU00303"/>
    </source>
</evidence>
<evidence type="ECO:0000305" key="2"/>
<reference key="1">
    <citation type="submission" date="2000-04" db="EMBL/GenBank/DDBJ databases">
        <title>Complete nucleotide sequence of the F plasmid: its implications for organization and diversification of plasmid genomes.</title>
        <authorList>
            <person name="Shimizu H."/>
            <person name="Saitoh Y."/>
            <person name="Suda Y."/>
            <person name="Uehara K."/>
            <person name="Sampei G."/>
            <person name="Mizobuchi K."/>
        </authorList>
    </citation>
    <scope>NUCLEOTIDE SEQUENCE [LARGE SCALE GENOMIC DNA]</scope>
    <source>
        <strain>K12 / CR63</strain>
    </source>
</reference>
<sequence length="137" mass="15854">MFNRRVLFLSVFSCAVFMLSGCSSNRFASRDANATYVNTQLKIIPRSQEKIQAQSQCSRSFSLLQKLNTDKFSMYRNQFDEINDAYFFYKRNVDLMNKDSKELMASVLDSKLDMVCVRVDNASFVGIYGKMKKVMDL</sequence>
<organism>
    <name type="scientific">Escherichia coli (strain K12)</name>
    <dbReference type="NCBI Taxonomy" id="83333"/>
    <lineage>
        <taxon>Bacteria</taxon>
        <taxon>Pseudomonadati</taxon>
        <taxon>Pseudomonadota</taxon>
        <taxon>Gammaproteobacteria</taxon>
        <taxon>Enterobacterales</taxon>
        <taxon>Enterobacteriaceae</taxon>
        <taxon>Escherichia</taxon>
    </lineage>
</organism>
<dbReference type="EMBL" id="AP001918">
    <property type="protein sequence ID" value="BAA97884.1"/>
    <property type="molecule type" value="Genomic_DNA"/>
</dbReference>
<dbReference type="RefSeq" id="NP_061393.1">
    <property type="nucleotide sequence ID" value="NC_002483.1"/>
</dbReference>
<dbReference type="RefSeq" id="WP_000483319.1">
    <property type="nucleotide sequence ID" value="NZ_JACEFS010000062.1"/>
</dbReference>
<dbReference type="KEGG" id="ecoc:C3026_24170"/>
<dbReference type="PATRIC" id="fig|83333.107.peg.588"/>
<dbReference type="OrthoDB" id="6506698at2"/>
<dbReference type="GO" id="GO:0016020">
    <property type="term" value="C:membrane"/>
    <property type="evidence" value="ECO:0007669"/>
    <property type="project" value="UniProtKB-SubCell"/>
</dbReference>
<dbReference type="PROSITE" id="PS51257">
    <property type="entry name" value="PROKAR_LIPOPROTEIN"/>
    <property type="match status" value="1"/>
</dbReference>
<keyword id="KW-0449">Lipoprotein</keyword>
<keyword id="KW-0472">Membrane</keyword>
<keyword id="KW-0564">Palmitate</keyword>
<keyword id="KW-0614">Plasmid</keyword>
<keyword id="KW-0732">Signal</keyword>
<proteinExistence type="inferred from homology"/>
<accession>Q9JMT5</accession>